<evidence type="ECO:0000255" key="1">
    <source>
        <dbReference type="HAMAP-Rule" id="MF_00050"/>
    </source>
</evidence>
<keyword id="KW-0963">Cytoplasm</keyword>
<keyword id="KW-0251">Elongation factor</keyword>
<keyword id="KW-0648">Protein biosynthesis</keyword>
<name>EFTS_BACC4</name>
<feature type="chain" id="PRO_1000116690" description="Elongation factor Ts">
    <location>
        <begin position="1"/>
        <end position="295"/>
    </location>
</feature>
<feature type="region of interest" description="Involved in Mg(2+) ion dislocation from EF-Tu" evidence="1">
    <location>
        <begin position="79"/>
        <end position="82"/>
    </location>
</feature>
<reference key="1">
    <citation type="submission" date="2008-10" db="EMBL/GenBank/DDBJ databases">
        <title>Genome sequence of Bacillus cereus B4264.</title>
        <authorList>
            <person name="Dodson R.J."/>
            <person name="Durkin A.S."/>
            <person name="Rosovitz M.J."/>
            <person name="Rasko D.A."/>
            <person name="Hoffmaster A."/>
            <person name="Ravel J."/>
            <person name="Sutton G."/>
        </authorList>
    </citation>
    <scope>NUCLEOTIDE SEQUENCE [LARGE SCALE GENOMIC DNA]</scope>
    <source>
        <strain>B4264</strain>
    </source>
</reference>
<organism>
    <name type="scientific">Bacillus cereus (strain B4264)</name>
    <dbReference type="NCBI Taxonomy" id="405532"/>
    <lineage>
        <taxon>Bacteria</taxon>
        <taxon>Bacillati</taxon>
        <taxon>Bacillota</taxon>
        <taxon>Bacilli</taxon>
        <taxon>Bacillales</taxon>
        <taxon>Bacillaceae</taxon>
        <taxon>Bacillus</taxon>
        <taxon>Bacillus cereus group</taxon>
    </lineage>
</organism>
<dbReference type="EMBL" id="CP001176">
    <property type="protein sequence ID" value="ACK64013.1"/>
    <property type="molecule type" value="Genomic_DNA"/>
</dbReference>
<dbReference type="RefSeq" id="WP_001018578.1">
    <property type="nucleotide sequence ID" value="NZ_VEHB01000002.1"/>
</dbReference>
<dbReference type="SMR" id="B7HDU9"/>
<dbReference type="KEGG" id="bcb:BCB4264_A3924"/>
<dbReference type="HOGENOM" id="CLU_047155_0_2_9"/>
<dbReference type="Proteomes" id="UP000007096">
    <property type="component" value="Chromosome"/>
</dbReference>
<dbReference type="GO" id="GO:0005737">
    <property type="term" value="C:cytoplasm"/>
    <property type="evidence" value="ECO:0007669"/>
    <property type="project" value="UniProtKB-SubCell"/>
</dbReference>
<dbReference type="GO" id="GO:0003746">
    <property type="term" value="F:translation elongation factor activity"/>
    <property type="evidence" value="ECO:0007669"/>
    <property type="project" value="UniProtKB-UniRule"/>
</dbReference>
<dbReference type="CDD" id="cd14275">
    <property type="entry name" value="UBA_EF-Ts"/>
    <property type="match status" value="1"/>
</dbReference>
<dbReference type="FunFam" id="1.10.286.20:FF:000003">
    <property type="entry name" value="Elongation factor Ts"/>
    <property type="match status" value="1"/>
</dbReference>
<dbReference type="FunFam" id="1.10.8.10:FF:000001">
    <property type="entry name" value="Elongation factor Ts"/>
    <property type="match status" value="1"/>
</dbReference>
<dbReference type="FunFam" id="3.30.479.20:FF:000005">
    <property type="entry name" value="Elongation factor Ts"/>
    <property type="match status" value="1"/>
</dbReference>
<dbReference type="Gene3D" id="1.10.286.20">
    <property type="match status" value="1"/>
</dbReference>
<dbReference type="Gene3D" id="1.10.8.10">
    <property type="entry name" value="DNA helicase RuvA subunit, C-terminal domain"/>
    <property type="match status" value="1"/>
</dbReference>
<dbReference type="Gene3D" id="3.30.479.20">
    <property type="entry name" value="Elongation factor Ts, dimerisation domain"/>
    <property type="match status" value="2"/>
</dbReference>
<dbReference type="HAMAP" id="MF_00050">
    <property type="entry name" value="EF_Ts"/>
    <property type="match status" value="1"/>
</dbReference>
<dbReference type="InterPro" id="IPR036402">
    <property type="entry name" value="EF-Ts_dimer_sf"/>
</dbReference>
<dbReference type="InterPro" id="IPR001816">
    <property type="entry name" value="Transl_elong_EFTs/EF1B"/>
</dbReference>
<dbReference type="InterPro" id="IPR014039">
    <property type="entry name" value="Transl_elong_EFTs/EF1B_dimer"/>
</dbReference>
<dbReference type="InterPro" id="IPR018101">
    <property type="entry name" value="Transl_elong_Ts_CS"/>
</dbReference>
<dbReference type="InterPro" id="IPR009060">
    <property type="entry name" value="UBA-like_sf"/>
</dbReference>
<dbReference type="NCBIfam" id="TIGR00116">
    <property type="entry name" value="tsf"/>
    <property type="match status" value="1"/>
</dbReference>
<dbReference type="PANTHER" id="PTHR11741">
    <property type="entry name" value="ELONGATION FACTOR TS"/>
    <property type="match status" value="1"/>
</dbReference>
<dbReference type="PANTHER" id="PTHR11741:SF0">
    <property type="entry name" value="ELONGATION FACTOR TS, MITOCHONDRIAL"/>
    <property type="match status" value="1"/>
</dbReference>
<dbReference type="Pfam" id="PF00889">
    <property type="entry name" value="EF_TS"/>
    <property type="match status" value="1"/>
</dbReference>
<dbReference type="SUPFAM" id="SSF54713">
    <property type="entry name" value="Elongation factor Ts (EF-Ts), dimerisation domain"/>
    <property type="match status" value="2"/>
</dbReference>
<dbReference type="SUPFAM" id="SSF46934">
    <property type="entry name" value="UBA-like"/>
    <property type="match status" value="1"/>
</dbReference>
<dbReference type="PROSITE" id="PS01126">
    <property type="entry name" value="EF_TS_1"/>
    <property type="match status" value="1"/>
</dbReference>
<dbReference type="PROSITE" id="PS01127">
    <property type="entry name" value="EF_TS_2"/>
    <property type="match status" value="1"/>
</dbReference>
<sequence length="295" mass="32479">MAITAQMVKELREKTGAGMMDCKKALTETNGDMEKAIDFLREKGIAKAAKKADRIAAEGLTFIETNGNDALILELNSETDFVAKNEGFQTLIKELAAHLLTNKPANVEEAMAQTMENGKKVEEHINEAIAKIGEKLTLRRFEIVSKTDADAFGAYLHMGGRIGVLTVLEGSTDEAAAKDVAMHIAAVNPKYIDRDAVTAEEVEHERQVLTQQALNEGKPEKIVAKMVEGRLGKFFEEICLLDQAFVKNPDMKVRQFVESKGGTLKGFVRYAVGEGIEKREDNFAEEVMNQVKGSN</sequence>
<gene>
    <name evidence="1" type="primary">tsf</name>
    <name type="ordered locus">BCB4264_A3924</name>
</gene>
<comment type="function">
    <text evidence="1">Associates with the EF-Tu.GDP complex and induces the exchange of GDP to GTP. It remains bound to the aminoacyl-tRNA.EF-Tu.GTP complex up to the GTP hydrolysis stage on the ribosome.</text>
</comment>
<comment type="subcellular location">
    <subcellularLocation>
        <location evidence="1">Cytoplasm</location>
    </subcellularLocation>
</comment>
<comment type="similarity">
    <text evidence="1">Belongs to the EF-Ts family.</text>
</comment>
<proteinExistence type="inferred from homology"/>
<accession>B7HDU9</accession>
<protein>
    <recommendedName>
        <fullName evidence="1">Elongation factor Ts</fullName>
        <shortName evidence="1">EF-Ts</shortName>
    </recommendedName>
</protein>